<protein>
    <recommendedName>
        <fullName evidence="8">N.vectensis toxin 1 2</fullName>
        <shortName evidence="8">Nv1</shortName>
    </recommendedName>
    <alternativeName>
        <fullName evidence="7">Neurotoxin Nv1-116.27.1</fullName>
    </alternativeName>
    <alternativeName>
        <fullName evidence="12">Neurotoxin Nv1-12</fullName>
    </alternativeName>
    <alternativeName>
        <fullName evidence="11">Neurotoxin Nv1-7</fullName>
    </alternativeName>
</protein>
<evidence type="ECO:0000250" key="1">
    <source>
        <dbReference type="UniProtKB" id="P19651"/>
    </source>
</evidence>
<evidence type="ECO:0000255" key="2"/>
<evidence type="ECO:0000269" key="3">
    <source>
    </source>
</evidence>
<evidence type="ECO:0000269" key="4">
    <source>
    </source>
</evidence>
<evidence type="ECO:0000269" key="5">
    <source>
    </source>
</evidence>
<evidence type="ECO:0000269" key="6">
    <source>
    </source>
</evidence>
<evidence type="ECO:0000303" key="7">
    <source>
    </source>
</evidence>
<evidence type="ECO:0000303" key="8">
    <source>
    </source>
</evidence>
<evidence type="ECO:0000305" key="9"/>
<evidence type="ECO:0000305" key="10">
    <source>
    </source>
</evidence>
<evidence type="ECO:0000312" key="11">
    <source>
        <dbReference type="EMBL" id="ABW97337.1"/>
    </source>
</evidence>
<evidence type="ECO:0000312" key="12">
    <source>
        <dbReference type="EMBL" id="ABW97342.1"/>
    </source>
</evidence>
<keyword id="KW-0025">Alternative splicing</keyword>
<keyword id="KW-0165">Cleavage on pair of basic residues</keyword>
<keyword id="KW-1015">Disulfide bond</keyword>
<keyword id="KW-0872">Ion channel impairing toxin</keyword>
<keyword id="KW-0528">Neurotoxin</keyword>
<keyword id="KW-1185">Reference proteome</keyword>
<keyword id="KW-0964">Secreted</keyword>
<keyword id="KW-0732">Signal</keyword>
<keyword id="KW-0800">Toxin</keyword>
<keyword id="KW-0738">Voltage-gated sodium channel impairing toxin</keyword>
<proteinExistence type="evidence at protein level"/>
<gene>
    <name type="ORF">v1g113065</name>
</gene>
<dbReference type="EMBL" id="EU124458">
    <property type="protein sequence ID" value="ABW97337.1"/>
    <property type="molecule type" value="Genomic_DNA"/>
</dbReference>
<dbReference type="EMBL" id="EU124463">
    <property type="protein sequence ID" value="ABW97342.1"/>
    <property type="molecule type" value="Genomic_DNA"/>
</dbReference>
<dbReference type="EMBL" id="DS469622">
    <property type="protein sequence ID" value="EDO38669.1"/>
    <property type="status" value="ALT_SEQ"/>
    <property type="molecule type" value="Genomic_DNA"/>
</dbReference>
<dbReference type="RefSeq" id="XP_001619790.1">
    <property type="nucleotide sequence ID" value="XM_001619740.1"/>
</dbReference>
<dbReference type="RefSeq" id="XP_001630732.1">
    <property type="nucleotide sequence ID" value="XM_001630682.1"/>
</dbReference>
<dbReference type="SMR" id="B1NWS1"/>
<dbReference type="HOGENOM" id="CLU_2944416_0_0_1"/>
<dbReference type="InParanoid" id="B1NWS1"/>
<dbReference type="PhylomeDB" id="B1NWS1"/>
<dbReference type="Proteomes" id="UP000001593">
    <property type="component" value="Unassembled WGS sequence"/>
</dbReference>
<dbReference type="GO" id="GO:0005576">
    <property type="term" value="C:extracellular region"/>
    <property type="evidence" value="ECO:0007669"/>
    <property type="project" value="UniProtKB-SubCell"/>
</dbReference>
<dbReference type="GO" id="GO:0017080">
    <property type="term" value="F:sodium channel regulator activity"/>
    <property type="evidence" value="ECO:0007669"/>
    <property type="project" value="UniProtKB-KW"/>
</dbReference>
<dbReference type="GO" id="GO:0090729">
    <property type="term" value="F:toxin activity"/>
    <property type="evidence" value="ECO:0007669"/>
    <property type="project" value="UniProtKB-KW"/>
</dbReference>
<dbReference type="Gene3D" id="2.20.20.10">
    <property type="entry name" value="Anthopleurin-A"/>
    <property type="match status" value="1"/>
</dbReference>
<dbReference type="InterPro" id="IPR023355">
    <property type="entry name" value="Myo_ane_neurotoxin_sf"/>
</dbReference>
<dbReference type="Pfam" id="PF00706">
    <property type="entry name" value="Toxin_4"/>
    <property type="match status" value="1"/>
</dbReference>
<dbReference type="SUPFAM" id="SSF57392">
    <property type="entry name" value="Defensin-like"/>
    <property type="match status" value="1"/>
</dbReference>
<reference key="1">
    <citation type="journal article" date="2008" name="Mol. Biol. Evol.">
        <title>Concerted evolution of sea anemone neurotoxin genes is revealed through analysis of the Nematostella vectensis genome.</title>
        <authorList>
            <person name="Moran Y."/>
            <person name="Weinberger H."/>
            <person name="Sullivan J.C."/>
            <person name="Reitzel A.M."/>
            <person name="Finnerty J.R."/>
            <person name="Gurevitz M."/>
        </authorList>
    </citation>
    <scope>NUCLEOTIDE SEQUENCE [GENOMIC DNA]</scope>
    <source>
        <strain>Crane Marsh</strain>
        <strain>Neponset River Marsh</strain>
    </source>
</reference>
<reference key="2">
    <citation type="journal article" date="2007" name="Science">
        <title>Sea anemone genome reveals ancestral eumetazoan gene repertoire and genomic organization.</title>
        <authorList>
            <person name="Putnam N.H."/>
            <person name="Srivastava M."/>
            <person name="Hellsten U."/>
            <person name="Dirks B."/>
            <person name="Chapman J."/>
            <person name="Salamov A."/>
            <person name="Terry A."/>
            <person name="Shapiro H."/>
            <person name="Lindquist E."/>
            <person name="Kapitonov V.V."/>
            <person name="Jurka J."/>
            <person name="Genikhovich G."/>
            <person name="Grigoriev I.V."/>
            <person name="Lucas S.M."/>
            <person name="Steele R.E."/>
            <person name="Finnerty J.R."/>
            <person name="Technau U."/>
            <person name="Martindale M.Q."/>
            <person name="Rokhsar D.S."/>
        </authorList>
    </citation>
    <scope>NUCLEOTIDE SEQUENCE [LARGE SCALE GENOMIC DNA]</scope>
    <source>
        <strain>CH2 X CH6</strain>
    </source>
</reference>
<reference key="3">
    <citation type="journal article" date="2008" name="J. Mol. Biol.">
        <title>Intron retention as a posttranscriptional regulatory mechanism of neurotoxin expression at early life stages of the starlet anemone Nematostella vectensis.</title>
        <authorList>
            <person name="Moran Y."/>
            <person name="Weinberger H."/>
            <person name="Reitzel A.M."/>
            <person name="Sullivan J.C."/>
            <person name="Kahn R."/>
            <person name="Gordon D."/>
            <person name="Finnerty J.R."/>
            <person name="Gurevitz M."/>
        </authorList>
    </citation>
    <scope>FUNCTION</scope>
    <scope>ALTERNATIVE SPLICING</scope>
    <scope>DEVELOPMENTAL STAGE</scope>
    <scope>TOXIC DOSE</scope>
    <source>
        <strain>Sippewissett Marsh</strain>
    </source>
</reference>
<reference key="4">
    <citation type="journal article" date="2012" name="Proc. R. Soc. B">
        <title>Neurotoxin localization to ectodermal gland cells uncovers an alternative mechanism of venom delivery in sea anemones.</title>
        <authorList>
            <person name="Moran Y."/>
            <person name="Genikhovich G."/>
            <person name="Gordon D."/>
            <person name="Wienkoop S."/>
            <person name="Zenkert C."/>
            <person name="Ozbek S."/>
            <person name="Technau U."/>
            <person name="Gurevitz M."/>
        </authorList>
    </citation>
    <scope>FUNCTION</scope>
    <scope>TISSUE SPECIFICITY</scope>
    <scope>DEVELOPMENTAL STAGE</scope>
</reference>
<reference key="5">
    <citation type="journal article" date="2018" name="Elife">
        <title>Dynamics of venom composition across a complex life cycle.</title>
        <authorList>
            <person name="Columbus-Shenkar Y.Y."/>
            <person name="Sachkova M.Y."/>
            <person name="Macrander J."/>
            <person name="Fridrich A."/>
            <person name="Modepalli V."/>
            <person name="Reitzel A.M."/>
            <person name="Sunagar K."/>
            <person name="Moran Y."/>
        </authorList>
    </citation>
    <scope>FUNCTION</scope>
    <scope>DEVELOPMENTAL STAGE</scope>
</reference>
<reference key="6">
    <citation type="journal article" date="2019" name="Mol. Biol. Evol.">
        <title>The birth and death of toxins with distinct functions: a case study in the sea anemone Nematostella.</title>
        <authorList>
            <person name="Sachkova M.Y."/>
            <person name="Singer S.A."/>
            <person name="Macrander J."/>
            <person name="Reitzel A.M."/>
            <person name="Peigneur S."/>
            <person name="Tytgat J."/>
            <person name="Moran Y."/>
        </authorList>
    </citation>
    <scope>FUNCTION</scope>
    <scope>IDENTIFICATION BY MASS SPECTROMETRY</scope>
    <scope>DEVELOPMENTAL STAGE</scope>
</reference>
<accession>B1NWS1</accession>
<accession>A7SCD9</accession>
<accession>B1NWS6</accession>
<comment type="function">
    <text evidence="3 4 5 6">Binds to site 3 of voltage-gated sodium channels and inhibits the inactivation process (PubMed:18538344). Is highly active on DmNav1/TipE (drosophila) and is only extremely weakly active on rat Nav1.4-beta-1/SCN4A-SCN1B, and on human Nav1.5-beta-1/SCN5A-beta-1 (PubMed:18538344). This reveals high specificity for arthropod over mammalian channels (PubMed:18538344). In vivo, when released into the medium, this recombinant toxin induces impaired swimming, paralysis and death of the crustacean A.nauplii within several hours (PubMed:22048953). Also causes paralysis of cherry shrimps immediately after injection at very low doses (PubMed:29424690). Its effect on zebrafish (D.rerio) larvae is also rapid, since it induces tail twitching accompanied by impaired swimming after 20 minutes and complete paralysis within 45 minutes (PubMed:22048953). It has also been observed to cause death of zebrafish larvae within 1 hour (PubMed:31134275).</text>
</comment>
<comment type="subcellular location">
    <subcellularLocation>
        <location evidence="3">Secreted</location>
    </subcellularLocation>
</comment>
<comment type="alternative products">
    <event type="alternative splicing"/>
    <isoform>
        <id>B1NWS1-1</id>
        <name>1</name>
        <sequence type="displayed"/>
    </isoform>
    <isoform>
        <id>B1NWS1-2</id>
        <name>2</name>
        <name>truncated</name>
        <sequence type="described" ref="VSP_039748"/>
    </isoform>
    <text>Intron retention discovered for all transcripts, no experimental confirmation available for this specific sequence.</text>
</comment>
<comment type="tissue specificity">
    <text evidence="4 5">Expressed in ectodermal glands and in clumps outside of the extodermal layer (PubMed:22048953). Is not expressed in nematocytes (PubMed:22048953). In adult female tissues, shows similar expression levels in mesenteries (gametes-producing tissue), tentacles, pharynx and physa (PubMed:29424690).</text>
</comment>
<comment type="developmental stage">
    <text evidence="3 4 5 6">Is detected in unfertilized eggs (at protein level) (PubMed:29424690, PubMed:31134275). Is also detected in late planulae, primary polyps and adults (both females and males) (at protein level) (PubMed:22048953, PubMed:29424690). Nv1 is transcribed throughout the complete life cycle and is found at multiple developmental stages including unfertilized eggs, blastulae, gastrulae, early planulae, planulae, metamorphosing planulae, primary polyps, juvenile polyps (2 and 4 months old), adult males, and adult females, with highest levels in juvenile polyps and adults (PubMed:18538344, PubMed:29424690). Importantly, Nv1 transcripts are not spliced in the embryo and planula due to intron retention and therefore Nv1 can be considered purely an adult toxin (PubMed:18538344).</text>
</comment>
<comment type="toxic dose">
    <text evidence="3">PD(50) is 76 nmol/kg into blowfly larvae.</text>
</comment>
<comment type="miscellaneous">
    <text>Nv1 toxin seems to be encoded by 8 different genes. 4 of them code for identical precursors, whereas 4 others code for very similar precursors. In the genome draft, 6 additional loci are also correlated to Nv1 toxin, but they are not predicted to be functional genes. This high similarity may be explained by concerted evolution.</text>
</comment>
<comment type="miscellaneous">
    <text evidence="9">The primary structure of the mature peptide is identical in 9 entries (AC B1NWS4, AC B1NWS1, AC B1NWR6, AC P0CH90, AC P0CH46, AC B1NWS8, AC A7SCE5, AC B1NWR7 and AC P0CH45). Additional information can be found in entry AC B1NWS4.</text>
</comment>
<comment type="miscellaneous">
    <molecule>Isoform 2</molecule>
    <text evidence="9">Due to an intron retention observed only in early life stages (embryo and planula).</text>
</comment>
<comment type="miscellaneous">
    <text evidence="3">Negative results: has no activity on the rat brain channel Nav1.2a-beta-1/SCN2A-SCN1B.</text>
</comment>
<comment type="similarity">
    <text evidence="9">Belongs to the sea anemone sodium channel inhibitory toxin family. Type II subfamily.</text>
</comment>
<comment type="sequence caution" evidence="9">
    <conflict type="erroneous gene model prediction">
        <sequence resource="EMBL-CDS" id="EDO38669"/>
    </conflict>
</comment>
<sequence>MASFKIVIVCLALLVAVASARRRDMMSDDELDYHFSKRGIPCACDSDGPDIRSASLSGIVWMGSCPSGWKKCKSYYSIVADCCNQ</sequence>
<organism>
    <name type="scientific">Nematostella vectensis</name>
    <name type="common">Starlet sea anemone</name>
    <dbReference type="NCBI Taxonomy" id="45351"/>
    <lineage>
        <taxon>Eukaryota</taxon>
        <taxon>Metazoa</taxon>
        <taxon>Cnidaria</taxon>
        <taxon>Anthozoa</taxon>
        <taxon>Hexacorallia</taxon>
        <taxon>Actiniaria</taxon>
        <taxon>Edwardsiidae</taxon>
        <taxon>Nematostella</taxon>
    </lineage>
</organism>
<name>NA227_NEMVE</name>
<feature type="signal peptide" evidence="2">
    <location>
        <begin position="1"/>
        <end position="20"/>
    </location>
</feature>
<feature type="propeptide" id="PRO_0000398315" evidence="9">
    <location>
        <begin position="21"/>
        <end position="36"/>
    </location>
</feature>
<feature type="chain" id="PRO_5000319665" description="N.vectensis toxin 1 2" evidence="10">
    <location>
        <begin position="39"/>
        <end position="85"/>
    </location>
</feature>
<feature type="disulfide bond" evidence="1">
    <location>
        <begin position="42"/>
        <end position="82"/>
    </location>
</feature>
<feature type="disulfide bond" evidence="1">
    <location>
        <begin position="44"/>
        <end position="72"/>
    </location>
</feature>
<feature type="disulfide bond" evidence="1">
    <location>
        <begin position="65"/>
        <end position="83"/>
    </location>
</feature>
<feature type="splice variant" id="VSP_039748" description="In isoform 2." evidence="9">
    <original>RDMMSDDELDYHFSKRGIPCACDSDGPDIRSASLSGIVWMGSCPSGWKKCKSYYSIVADCCNQ</original>
    <variation>K</variation>
    <location>
        <begin position="23"/>
        <end position="85"/>
    </location>
</feature>
<feature type="sequence variant" description="In Nv1-7.">
    <original>A</original>
    <variation>T</variation>
    <location>
        <position position="2"/>
    </location>
</feature>
<feature type="sequence variant" description="In Nv1-7 and Nv1-12.">
    <original>F</original>
    <variation>L</variation>
    <location>
        <position position="35"/>
    </location>
</feature>